<comment type="function">
    <text evidence="1">Cell wall formation. Catalyzes the transfer of a GlcNAc subunit on undecaprenyl-pyrophosphoryl-MurNAc-pentapeptide (lipid intermediate I) to form undecaprenyl-pyrophosphoryl-MurNAc-(pentapeptide)GlcNAc (lipid intermediate II).</text>
</comment>
<comment type="catalytic activity">
    <reaction evidence="1">
        <text>di-trans,octa-cis-undecaprenyl diphospho-N-acetyl-alpha-D-muramoyl-L-alanyl-D-glutamyl-meso-2,6-diaminopimeloyl-D-alanyl-D-alanine + UDP-N-acetyl-alpha-D-glucosamine = di-trans,octa-cis-undecaprenyl diphospho-[N-acetyl-alpha-D-glucosaminyl-(1-&gt;4)]-N-acetyl-alpha-D-muramoyl-L-alanyl-D-glutamyl-meso-2,6-diaminopimeloyl-D-alanyl-D-alanine + UDP + H(+)</text>
        <dbReference type="Rhea" id="RHEA:31227"/>
        <dbReference type="ChEBI" id="CHEBI:15378"/>
        <dbReference type="ChEBI" id="CHEBI:57705"/>
        <dbReference type="ChEBI" id="CHEBI:58223"/>
        <dbReference type="ChEBI" id="CHEBI:61387"/>
        <dbReference type="ChEBI" id="CHEBI:61388"/>
        <dbReference type="EC" id="2.4.1.227"/>
    </reaction>
</comment>
<comment type="pathway">
    <text evidence="1">Cell wall biogenesis; peptidoglycan biosynthesis.</text>
</comment>
<comment type="subcellular location">
    <subcellularLocation>
        <location evidence="1">Cell membrane</location>
        <topology evidence="1">Peripheral membrane protein</topology>
        <orientation evidence="1">Cytoplasmic side</orientation>
    </subcellularLocation>
</comment>
<comment type="similarity">
    <text evidence="1">Belongs to the glycosyltransferase 28 family. MurG subfamily.</text>
</comment>
<accession>A1TAW8</accession>
<evidence type="ECO:0000255" key="1">
    <source>
        <dbReference type="HAMAP-Rule" id="MF_00033"/>
    </source>
</evidence>
<evidence type="ECO:0000256" key="2">
    <source>
        <dbReference type="SAM" id="MobiDB-lite"/>
    </source>
</evidence>
<keyword id="KW-0131">Cell cycle</keyword>
<keyword id="KW-0132">Cell division</keyword>
<keyword id="KW-1003">Cell membrane</keyword>
<keyword id="KW-0133">Cell shape</keyword>
<keyword id="KW-0961">Cell wall biogenesis/degradation</keyword>
<keyword id="KW-0328">Glycosyltransferase</keyword>
<keyword id="KW-0472">Membrane</keyword>
<keyword id="KW-0573">Peptidoglycan synthesis</keyword>
<keyword id="KW-0808">Transferase</keyword>
<gene>
    <name evidence="1" type="primary">murG</name>
    <name type="ordered locus">Mvan_3523</name>
</gene>
<feature type="chain" id="PRO_0000315123" description="UDP-N-acetylglucosamine--N-acetylmuramyl-(pentapeptide) pyrophosphoryl-undecaprenol N-acetylglucosamine transferase">
    <location>
        <begin position="1"/>
        <end position="401"/>
    </location>
</feature>
<feature type="region of interest" description="Disordered" evidence="2">
    <location>
        <begin position="1"/>
        <end position="24"/>
    </location>
</feature>
<feature type="binding site" evidence="1">
    <location>
        <begin position="39"/>
        <end position="41"/>
    </location>
    <ligand>
        <name>UDP-N-acetyl-alpha-D-glucosamine</name>
        <dbReference type="ChEBI" id="CHEBI:57705"/>
    </ligand>
</feature>
<feature type="binding site" evidence="1">
    <location>
        <position position="157"/>
    </location>
    <ligand>
        <name>UDP-N-acetyl-alpha-D-glucosamine</name>
        <dbReference type="ChEBI" id="CHEBI:57705"/>
    </ligand>
</feature>
<feature type="binding site" evidence="1">
    <location>
        <position position="194"/>
    </location>
    <ligand>
        <name>UDP-N-acetyl-alpha-D-glucosamine</name>
        <dbReference type="ChEBI" id="CHEBI:57705"/>
    </ligand>
</feature>
<feature type="binding site" evidence="1">
    <location>
        <position position="228"/>
    </location>
    <ligand>
        <name>UDP-N-acetyl-alpha-D-glucosamine</name>
        <dbReference type="ChEBI" id="CHEBI:57705"/>
    </ligand>
</feature>
<feature type="binding site" evidence="1">
    <location>
        <position position="324"/>
    </location>
    <ligand>
        <name>UDP-N-acetyl-alpha-D-glucosamine</name>
        <dbReference type="ChEBI" id="CHEBI:57705"/>
    </ligand>
</feature>
<proteinExistence type="inferred from homology"/>
<sequence length="401" mass="42100">MTRISVPAGQERNDGGISVPAGQERSDRGISVVLAGGGTAGHIEPAMAVADALTALDPDVRITALGTERGLETRLVPQRGYHLELITLVPLPRKLSADLFRLPMRVLRAVRQTRRILDEVSADVVVGFGGYVAVPAYLAARSLRTHRRVPVVVHEANASAGWANKVGARSAQRVLSAVPDPGLPHVEVVGVPVREAITSLDRMALRAEARAHFGFADDARVLLVFGGSQGAQSLNRAVAGAAEKLAEQGISVLHAHGPKNTLDLPAPRPGDPPYVAVPYLERMDLAYAAADLAVCRSGAMTVAEVSAVGLPAVYVPLPIGNGEQRLNALPVVEAGGGILVEDRSLTPEFVAETVPGLLNNADTLAAMTAAAALAGHPDAARRVAEVALEVARRARDLRTRR</sequence>
<protein>
    <recommendedName>
        <fullName evidence="1">UDP-N-acetylglucosamine--N-acetylmuramyl-(pentapeptide) pyrophosphoryl-undecaprenol N-acetylglucosamine transferase</fullName>
        <ecNumber evidence="1">2.4.1.227</ecNumber>
    </recommendedName>
    <alternativeName>
        <fullName evidence="1">Undecaprenyl-PP-MurNAc-pentapeptide-UDPGlcNAc GlcNAc transferase</fullName>
    </alternativeName>
</protein>
<name>MURG_MYCVP</name>
<reference key="1">
    <citation type="submission" date="2006-12" db="EMBL/GenBank/DDBJ databases">
        <title>Complete sequence of Mycobacterium vanbaalenii PYR-1.</title>
        <authorList>
            <consortium name="US DOE Joint Genome Institute"/>
            <person name="Copeland A."/>
            <person name="Lucas S."/>
            <person name="Lapidus A."/>
            <person name="Barry K."/>
            <person name="Detter J.C."/>
            <person name="Glavina del Rio T."/>
            <person name="Hammon N."/>
            <person name="Israni S."/>
            <person name="Dalin E."/>
            <person name="Tice H."/>
            <person name="Pitluck S."/>
            <person name="Singan V."/>
            <person name="Schmutz J."/>
            <person name="Larimer F."/>
            <person name="Land M."/>
            <person name="Hauser L."/>
            <person name="Kyrpides N."/>
            <person name="Anderson I.J."/>
            <person name="Miller C."/>
            <person name="Richardson P."/>
        </authorList>
    </citation>
    <scope>NUCLEOTIDE SEQUENCE [LARGE SCALE GENOMIC DNA]</scope>
    <source>
        <strain>DSM 7251 / JCM 13017 / BCRC 16820 / KCTC 9966 / NRRL B-24157 / PYR-1</strain>
    </source>
</reference>
<organism>
    <name type="scientific">Mycolicibacterium vanbaalenii (strain DSM 7251 / JCM 13017 / BCRC 16820 / KCTC 9966 / NRRL B-24157 / PYR-1)</name>
    <name type="common">Mycobacterium vanbaalenii</name>
    <dbReference type="NCBI Taxonomy" id="350058"/>
    <lineage>
        <taxon>Bacteria</taxon>
        <taxon>Bacillati</taxon>
        <taxon>Actinomycetota</taxon>
        <taxon>Actinomycetes</taxon>
        <taxon>Mycobacteriales</taxon>
        <taxon>Mycobacteriaceae</taxon>
        <taxon>Mycolicibacterium</taxon>
    </lineage>
</organism>
<dbReference type="EC" id="2.4.1.227" evidence="1"/>
<dbReference type="EMBL" id="CP000511">
    <property type="protein sequence ID" value="ABM14318.1"/>
    <property type="molecule type" value="Genomic_DNA"/>
</dbReference>
<dbReference type="SMR" id="A1TAW8"/>
<dbReference type="STRING" id="350058.Mvan_3523"/>
<dbReference type="CAZy" id="GT28">
    <property type="family name" value="Glycosyltransferase Family 28"/>
</dbReference>
<dbReference type="KEGG" id="mva:Mvan_3523"/>
<dbReference type="eggNOG" id="COG0707">
    <property type="taxonomic scope" value="Bacteria"/>
</dbReference>
<dbReference type="HOGENOM" id="CLU_037404_1_0_11"/>
<dbReference type="UniPathway" id="UPA00219"/>
<dbReference type="Proteomes" id="UP000009159">
    <property type="component" value="Chromosome"/>
</dbReference>
<dbReference type="GO" id="GO:0005886">
    <property type="term" value="C:plasma membrane"/>
    <property type="evidence" value="ECO:0007669"/>
    <property type="project" value="UniProtKB-SubCell"/>
</dbReference>
<dbReference type="GO" id="GO:0051991">
    <property type="term" value="F:UDP-N-acetyl-D-glucosamine:N-acetylmuramoyl-L-alanyl-D-glutamyl-meso-2,6-diaminopimelyl-D-alanyl-D-alanine-diphosphoundecaprenol 4-beta-N-acetylglucosaminlytransferase activity"/>
    <property type="evidence" value="ECO:0007669"/>
    <property type="project" value="RHEA"/>
</dbReference>
<dbReference type="GO" id="GO:0050511">
    <property type="term" value="F:undecaprenyldiphospho-muramoylpentapeptide beta-N-acetylglucosaminyltransferase activity"/>
    <property type="evidence" value="ECO:0007669"/>
    <property type="project" value="UniProtKB-UniRule"/>
</dbReference>
<dbReference type="GO" id="GO:0005975">
    <property type="term" value="P:carbohydrate metabolic process"/>
    <property type="evidence" value="ECO:0007669"/>
    <property type="project" value="InterPro"/>
</dbReference>
<dbReference type="GO" id="GO:0051301">
    <property type="term" value="P:cell division"/>
    <property type="evidence" value="ECO:0007669"/>
    <property type="project" value="UniProtKB-KW"/>
</dbReference>
<dbReference type="GO" id="GO:0071555">
    <property type="term" value="P:cell wall organization"/>
    <property type="evidence" value="ECO:0007669"/>
    <property type="project" value="UniProtKB-KW"/>
</dbReference>
<dbReference type="GO" id="GO:0030259">
    <property type="term" value="P:lipid glycosylation"/>
    <property type="evidence" value="ECO:0007669"/>
    <property type="project" value="UniProtKB-UniRule"/>
</dbReference>
<dbReference type="GO" id="GO:0009252">
    <property type="term" value="P:peptidoglycan biosynthetic process"/>
    <property type="evidence" value="ECO:0007669"/>
    <property type="project" value="UniProtKB-UniRule"/>
</dbReference>
<dbReference type="GO" id="GO:0008360">
    <property type="term" value="P:regulation of cell shape"/>
    <property type="evidence" value="ECO:0007669"/>
    <property type="project" value="UniProtKB-KW"/>
</dbReference>
<dbReference type="CDD" id="cd03785">
    <property type="entry name" value="GT28_MurG"/>
    <property type="match status" value="1"/>
</dbReference>
<dbReference type="Gene3D" id="3.40.50.2000">
    <property type="entry name" value="Glycogen Phosphorylase B"/>
    <property type="match status" value="2"/>
</dbReference>
<dbReference type="HAMAP" id="MF_00033">
    <property type="entry name" value="MurG"/>
    <property type="match status" value="1"/>
</dbReference>
<dbReference type="InterPro" id="IPR006009">
    <property type="entry name" value="GlcNAc_MurG"/>
</dbReference>
<dbReference type="InterPro" id="IPR007235">
    <property type="entry name" value="Glyco_trans_28_C"/>
</dbReference>
<dbReference type="InterPro" id="IPR004276">
    <property type="entry name" value="GlycoTrans_28_N"/>
</dbReference>
<dbReference type="NCBIfam" id="TIGR01133">
    <property type="entry name" value="murG"/>
    <property type="match status" value="1"/>
</dbReference>
<dbReference type="PANTHER" id="PTHR21015:SF22">
    <property type="entry name" value="GLYCOSYLTRANSFERASE"/>
    <property type="match status" value="1"/>
</dbReference>
<dbReference type="PANTHER" id="PTHR21015">
    <property type="entry name" value="UDP-N-ACETYLGLUCOSAMINE--N-ACETYLMURAMYL-(PENTAPEPTIDE) PYROPHOSPHORYL-UNDECAPRENOL N-ACETYLGLUCOSAMINE TRANSFERASE 1"/>
    <property type="match status" value="1"/>
</dbReference>
<dbReference type="Pfam" id="PF04101">
    <property type="entry name" value="Glyco_tran_28_C"/>
    <property type="match status" value="1"/>
</dbReference>
<dbReference type="Pfam" id="PF03033">
    <property type="entry name" value="Glyco_transf_28"/>
    <property type="match status" value="1"/>
</dbReference>
<dbReference type="SUPFAM" id="SSF53756">
    <property type="entry name" value="UDP-Glycosyltransferase/glycogen phosphorylase"/>
    <property type="match status" value="1"/>
</dbReference>